<evidence type="ECO:0000255" key="1">
    <source>
        <dbReference type="PROSITE-ProRule" id="PRU01187"/>
    </source>
</evidence>
<evidence type="ECO:0000255" key="2">
    <source>
        <dbReference type="PROSITE-ProRule" id="PRU01188"/>
    </source>
</evidence>
<evidence type="ECO:0000256" key="3">
    <source>
        <dbReference type="SAM" id="MobiDB-lite"/>
    </source>
</evidence>
<dbReference type="EMBL" id="M64718">
    <property type="protein sequence ID" value="AAA29993.1"/>
    <property type="molecule type" value="mRNA"/>
</dbReference>
<dbReference type="PIR" id="B39340">
    <property type="entry name" value="B39340"/>
</dbReference>
<dbReference type="SMR" id="Q01241"/>
<dbReference type="GO" id="GO:0005882">
    <property type="term" value="C:intermediate filament"/>
    <property type="evidence" value="ECO:0007669"/>
    <property type="project" value="UniProtKB-KW"/>
</dbReference>
<dbReference type="GO" id="GO:0005635">
    <property type="term" value="C:nuclear envelope"/>
    <property type="evidence" value="ECO:0007669"/>
    <property type="project" value="TreeGrafter"/>
</dbReference>
<dbReference type="GO" id="GO:0005652">
    <property type="term" value="C:nuclear lamina"/>
    <property type="evidence" value="ECO:0007669"/>
    <property type="project" value="TreeGrafter"/>
</dbReference>
<dbReference type="GO" id="GO:0005200">
    <property type="term" value="F:structural constituent of cytoskeleton"/>
    <property type="evidence" value="ECO:0007669"/>
    <property type="project" value="TreeGrafter"/>
</dbReference>
<dbReference type="GO" id="GO:0031507">
    <property type="term" value="P:heterochromatin formation"/>
    <property type="evidence" value="ECO:0007669"/>
    <property type="project" value="TreeGrafter"/>
</dbReference>
<dbReference type="GO" id="GO:0006998">
    <property type="term" value="P:nuclear envelope organization"/>
    <property type="evidence" value="ECO:0007669"/>
    <property type="project" value="TreeGrafter"/>
</dbReference>
<dbReference type="GO" id="GO:0007097">
    <property type="term" value="P:nuclear migration"/>
    <property type="evidence" value="ECO:0007669"/>
    <property type="project" value="TreeGrafter"/>
</dbReference>
<dbReference type="GO" id="GO:0051664">
    <property type="term" value="P:nuclear pore localization"/>
    <property type="evidence" value="ECO:0007669"/>
    <property type="project" value="TreeGrafter"/>
</dbReference>
<dbReference type="GO" id="GO:0090435">
    <property type="term" value="P:protein localization to nuclear envelope"/>
    <property type="evidence" value="ECO:0007669"/>
    <property type="project" value="TreeGrafter"/>
</dbReference>
<dbReference type="Gene3D" id="1.20.5.170">
    <property type="match status" value="1"/>
</dbReference>
<dbReference type="Gene3D" id="2.60.40.1260">
    <property type="entry name" value="Lamin Tail domain"/>
    <property type="match status" value="1"/>
</dbReference>
<dbReference type="Gene3D" id="1.20.5.500">
    <property type="entry name" value="Single helix bin"/>
    <property type="match status" value="1"/>
</dbReference>
<dbReference type="Gene3D" id="1.20.5.1160">
    <property type="entry name" value="Vasodilator-stimulated phosphoprotein"/>
    <property type="match status" value="2"/>
</dbReference>
<dbReference type="InterPro" id="IPR018039">
    <property type="entry name" value="IF_conserved"/>
</dbReference>
<dbReference type="InterPro" id="IPR039008">
    <property type="entry name" value="IF_rod_dom"/>
</dbReference>
<dbReference type="InterPro" id="IPR016451">
    <property type="entry name" value="Intermed_filament_ifa/ifb"/>
</dbReference>
<dbReference type="InterPro" id="IPR001322">
    <property type="entry name" value="Lamin_tail_dom"/>
</dbReference>
<dbReference type="InterPro" id="IPR036415">
    <property type="entry name" value="Lamin_tail_dom_sf"/>
</dbReference>
<dbReference type="PANTHER" id="PTHR45721:SF12">
    <property type="entry name" value="INTERMEDIATE FILAMENT PROTEIN IFA-1"/>
    <property type="match status" value="1"/>
</dbReference>
<dbReference type="PANTHER" id="PTHR45721">
    <property type="entry name" value="LAMIN DM0-RELATED"/>
    <property type="match status" value="1"/>
</dbReference>
<dbReference type="Pfam" id="PF00038">
    <property type="entry name" value="Filament"/>
    <property type="match status" value="1"/>
</dbReference>
<dbReference type="PIRSF" id="PIRSF005546">
    <property type="entry name" value="Intermed_filamnt_Ifb-2"/>
    <property type="match status" value="1"/>
</dbReference>
<dbReference type="SMART" id="SM01391">
    <property type="entry name" value="Filament"/>
    <property type="match status" value="1"/>
</dbReference>
<dbReference type="SUPFAM" id="SSF64593">
    <property type="entry name" value="Intermediate filament protein, coiled coil region"/>
    <property type="match status" value="2"/>
</dbReference>
<dbReference type="SUPFAM" id="SSF74853">
    <property type="entry name" value="Lamin A/C globular tail domain"/>
    <property type="match status" value="1"/>
</dbReference>
<dbReference type="PROSITE" id="PS00226">
    <property type="entry name" value="IF_ROD_1"/>
    <property type="match status" value="1"/>
</dbReference>
<dbReference type="PROSITE" id="PS51842">
    <property type="entry name" value="IF_ROD_2"/>
    <property type="match status" value="1"/>
</dbReference>
<dbReference type="PROSITE" id="PS51841">
    <property type="entry name" value="LTD"/>
    <property type="match status" value="1"/>
</dbReference>
<feature type="chain" id="PRO_0000063856" description="70 kDa neurofilament protein">
    <location>
        <begin position="1"/>
        <end position="615"/>
    </location>
</feature>
<feature type="domain" description="IF rod" evidence="2">
    <location>
        <begin position="96"/>
        <end position="449"/>
    </location>
</feature>
<feature type="domain" description="LTD" evidence="1">
    <location>
        <begin position="499"/>
        <end position="612"/>
    </location>
</feature>
<feature type="region of interest" description="Head">
    <location>
        <begin position="1"/>
        <end position="99"/>
    </location>
</feature>
<feature type="region of interest" description="Disordered" evidence="3">
    <location>
        <begin position="1"/>
        <end position="31"/>
    </location>
</feature>
<feature type="region of interest" description="Coil 1A">
    <location>
        <begin position="100"/>
        <end position="135"/>
    </location>
</feature>
<feature type="region of interest" description="Linker 1">
    <location>
        <begin position="136"/>
        <end position="145"/>
    </location>
</feature>
<feature type="region of interest" description="Coil 1B">
    <location>
        <begin position="146"/>
        <end position="284"/>
    </location>
</feature>
<feature type="region of interest" description="Linker 12">
    <location>
        <begin position="285"/>
        <end position="303"/>
    </location>
</feature>
<feature type="region of interest" description="Coil 2">
    <location>
        <begin position="304"/>
        <end position="449"/>
    </location>
</feature>
<feature type="region of interest" description="Tail">
    <location>
        <begin position="450"/>
        <end position="615"/>
    </location>
</feature>
<feature type="compositionally biased region" description="Polar residues" evidence="3">
    <location>
        <begin position="21"/>
        <end position="30"/>
    </location>
</feature>
<sequence>MSVTQKKTEISTTTTYEGESRPSSGMSGFSYSAKIHPRTSGYINRSSQSPFRSSMGSNAAYTRSYDFSYGATAMPGRYANISSTGVNHVKANREREKQDMRDLNERFANYIEKVRFLEAQNKKLAGELEELKSKWGKETSAIKEMYETELEEARKLIDATNKEKITLDVRVTELIDQLERQQKDLEESRTYHQIDQEQIARQNQQLADLEGEISMLRRSIESLEKEKMRQSNILAKMNDEMEKMRMDLNNETINHLDAENRRQTLEEELEFQKDVHAQELKELAALAYRDTTAENREFWRNELAQAIRDIQQEYDAKCDQMRGDIEAYYNLKVQEFRTGATKQNMEVTRNKEENTKLKSNMTEIRNRLADLEARNAQLERTNQDLLRDLEEKDRQNELESCQYKEEITKLRGEMESILKELQDLMDIKLSLELEIAAYRKLLEGEESRVGMKQIVEQVVGARPNEAEVLSTILTRSEGGYEATGDSQISMKMMRGELAAKTTYQRTSKGSVSIKEADSQGCFIALETKKEENLTGWKIVRKVDDNKVYTYEIPNLVLKTGTVVKIWSKNHQAQARGDDLVSRENDTWGTGSNVVTILQNEKGEDKANYTQNTVYQ</sequence>
<organism>
    <name type="scientific">Doryteuthis pealeii</name>
    <name type="common">Longfin inshore squid</name>
    <name type="synonym">Loligo pealeii</name>
    <dbReference type="NCBI Taxonomy" id="1051067"/>
    <lineage>
        <taxon>Eukaryota</taxon>
        <taxon>Metazoa</taxon>
        <taxon>Spiralia</taxon>
        <taxon>Lophotrochozoa</taxon>
        <taxon>Mollusca</taxon>
        <taxon>Cephalopoda</taxon>
        <taxon>Coleoidea</taxon>
        <taxon>Decapodiformes</taxon>
        <taxon>Myopsida</taxon>
        <taxon>Loliginidae</taxon>
        <taxon>Doryteuthis</taxon>
    </lineage>
</organism>
<name>NF70_DORPE</name>
<comment type="alternative products">
    <event type="alternative splicing"/>
    <isoform>
        <id>Q01241-1</id>
        <name>NF70</name>
        <sequence type="displayed"/>
    </isoform>
    <isoform>
        <id>Q01240-1</id>
        <name>NF60</name>
        <sequence type="external"/>
    </isoform>
</comment>
<comment type="similarity">
    <text evidence="2">Belongs to the intermediate filament family.</text>
</comment>
<proteinExistence type="evidence at transcript level"/>
<protein>
    <recommendedName>
        <fullName>70 kDa neurofilament protein</fullName>
        <shortName>NF70</shortName>
    </recommendedName>
</protein>
<reference key="1">
    <citation type="journal article" date="1991" name="J. Biol. Chem.">
        <title>Squid low molecular weight neurofilament proteins are a novel class of neurofilament protein. A nuclear lamin-like core and multiple distinct proteins formed by alternative RNA processing.</title>
        <authorList>
            <person name="Szaro B.G."/>
            <person name="Pant H.C."/>
            <person name="Way J."/>
            <person name="Battey J."/>
        </authorList>
    </citation>
    <scope>NUCLEOTIDE SEQUENCE [MRNA]</scope>
    <source>
        <tissue>Brain</tissue>
    </source>
</reference>
<accession>Q01241</accession>
<keyword id="KW-0025">Alternative splicing</keyword>
<keyword id="KW-0175">Coiled coil</keyword>
<keyword id="KW-0403">Intermediate filament</keyword>